<gene>
    <name type="primary">PRT1</name>
    <name type="ordered locus">At3g24800</name>
    <name type="ORF">K7P8.9</name>
</gene>
<name>PRT1_ARATH</name>
<feature type="chain" id="PRO_0000056003" description="E3 ubiquitin-protein ligase PRT1">
    <location>
        <begin position="1"/>
        <end position="410"/>
    </location>
</feature>
<feature type="zinc finger region" description="RING-type 1" evidence="1">
    <location>
        <begin position="26"/>
        <end position="66"/>
    </location>
</feature>
<feature type="zinc finger region" description="RING-type 2" evidence="1">
    <location>
        <begin position="192"/>
        <end position="232"/>
    </location>
</feature>
<feature type="zinc finger region" description="ZZ-type" evidence="2">
    <location>
        <begin position="306"/>
        <end position="370"/>
    </location>
</feature>
<feature type="region of interest" description="Disordered" evidence="3">
    <location>
        <begin position="385"/>
        <end position="410"/>
    </location>
</feature>
<feature type="compositionally biased region" description="Low complexity" evidence="3">
    <location>
        <begin position="399"/>
        <end position="410"/>
    </location>
</feature>
<feature type="binding site" evidence="2">
    <location>
        <position position="311"/>
    </location>
    <ligand>
        <name>Zn(2+)</name>
        <dbReference type="ChEBI" id="CHEBI:29105"/>
        <label>1</label>
    </ligand>
</feature>
<feature type="binding site" evidence="2">
    <location>
        <position position="314"/>
    </location>
    <ligand>
        <name>Zn(2+)</name>
        <dbReference type="ChEBI" id="CHEBI:29105"/>
        <label>1</label>
    </ligand>
</feature>
<feature type="binding site" evidence="2">
    <location>
        <position position="326"/>
    </location>
    <ligand>
        <name>Zn(2+)</name>
        <dbReference type="ChEBI" id="CHEBI:29105"/>
        <label>2</label>
    </ligand>
</feature>
<feature type="binding site" evidence="2">
    <location>
        <position position="329"/>
    </location>
    <ligand>
        <name>Zn(2+)</name>
        <dbReference type="ChEBI" id="CHEBI:29105"/>
        <label>2</label>
    </ligand>
</feature>
<feature type="binding site" evidence="2">
    <location>
        <position position="338"/>
    </location>
    <ligand>
        <name>Zn(2+)</name>
        <dbReference type="ChEBI" id="CHEBI:29105"/>
        <label>1</label>
    </ligand>
</feature>
<feature type="binding site" evidence="2">
    <location>
        <position position="341"/>
    </location>
    <ligand>
        <name>Zn(2+)</name>
        <dbReference type="ChEBI" id="CHEBI:29105"/>
        <label>1</label>
    </ligand>
</feature>
<feature type="binding site" evidence="2">
    <location>
        <position position="356"/>
    </location>
    <ligand>
        <name>Zn(2+)</name>
        <dbReference type="ChEBI" id="CHEBI:29105"/>
        <label>2</label>
    </ligand>
</feature>
<feature type="binding site" evidence="2">
    <location>
        <position position="360"/>
    </location>
    <ligand>
        <name>Zn(2+)</name>
        <dbReference type="ChEBI" id="CHEBI:29105"/>
        <label>2</label>
    </ligand>
</feature>
<feature type="sequence conflict" description="In Ref. 5; AAM64697." evidence="8" ref="5">
    <original>E</original>
    <variation>D</variation>
    <location>
        <position position="394"/>
    </location>
</feature>
<evidence type="ECO:0000255" key="1">
    <source>
        <dbReference type="PROSITE-ProRule" id="PRU00175"/>
    </source>
</evidence>
<evidence type="ECO:0000255" key="2">
    <source>
        <dbReference type="PROSITE-ProRule" id="PRU00228"/>
    </source>
</evidence>
<evidence type="ECO:0000256" key="3">
    <source>
        <dbReference type="SAM" id="MobiDB-lite"/>
    </source>
</evidence>
<evidence type="ECO:0000269" key="4">
    <source>
    </source>
</evidence>
<evidence type="ECO:0000269" key="5">
    <source>
    </source>
</evidence>
<evidence type="ECO:0000269" key="6">
    <source>
    </source>
</evidence>
<evidence type="ECO:0000269" key="7">
    <source>
    </source>
</evidence>
<evidence type="ECO:0000305" key="8"/>
<dbReference type="EC" id="2.3.2.27"/>
<dbReference type="EMBL" id="AJ224306">
    <property type="protein sequence ID" value="CAA11891.1"/>
    <property type="molecule type" value="Genomic_DNA"/>
</dbReference>
<dbReference type="EMBL" id="AJ224307">
    <property type="protein sequence ID" value="CAA11892.1"/>
    <property type="molecule type" value="mRNA"/>
</dbReference>
<dbReference type="EMBL" id="AB028609">
    <property type="protein sequence ID" value="BAB02890.1"/>
    <property type="molecule type" value="Genomic_DNA"/>
</dbReference>
<dbReference type="EMBL" id="CP002686">
    <property type="protein sequence ID" value="AEE76948.1"/>
    <property type="molecule type" value="Genomic_DNA"/>
</dbReference>
<dbReference type="EMBL" id="AY080799">
    <property type="protein sequence ID" value="AAL87280.1"/>
    <property type="molecule type" value="mRNA"/>
</dbReference>
<dbReference type="EMBL" id="AY114077">
    <property type="protein sequence ID" value="AAM45125.1"/>
    <property type="molecule type" value="mRNA"/>
</dbReference>
<dbReference type="EMBL" id="AY087139">
    <property type="protein sequence ID" value="AAM64697.1"/>
    <property type="status" value="ALT_INIT"/>
    <property type="molecule type" value="mRNA"/>
</dbReference>
<dbReference type="PIR" id="T52193">
    <property type="entry name" value="T52193"/>
</dbReference>
<dbReference type="RefSeq" id="NP_189124.1">
    <property type="nucleotide sequence ID" value="NM_113392.3"/>
</dbReference>
<dbReference type="SMR" id="Q8LBL5"/>
<dbReference type="BioGRID" id="7409">
    <property type="interactions" value="1"/>
</dbReference>
<dbReference type="FunCoup" id="Q8LBL5">
    <property type="interactions" value="611"/>
</dbReference>
<dbReference type="STRING" id="3702.Q8LBL5"/>
<dbReference type="iPTMnet" id="Q8LBL5"/>
<dbReference type="PaxDb" id="3702-AT3G24800.1"/>
<dbReference type="ProteomicsDB" id="226479"/>
<dbReference type="EnsemblPlants" id="AT3G24800.1">
    <property type="protein sequence ID" value="AT3G24800.1"/>
    <property type="gene ID" value="AT3G24800"/>
</dbReference>
<dbReference type="GeneID" id="822078"/>
<dbReference type="Gramene" id="AT3G24800.1">
    <property type="protein sequence ID" value="AT3G24800.1"/>
    <property type="gene ID" value="AT3G24800"/>
</dbReference>
<dbReference type="KEGG" id="ath:AT3G24800"/>
<dbReference type="Araport" id="AT3G24800"/>
<dbReference type="TAIR" id="AT3G24800">
    <property type="gene designation" value="PRT1"/>
</dbReference>
<dbReference type="eggNOG" id="KOG4159">
    <property type="taxonomic scope" value="Eukaryota"/>
</dbReference>
<dbReference type="eggNOG" id="KOG4582">
    <property type="taxonomic scope" value="Eukaryota"/>
</dbReference>
<dbReference type="HOGENOM" id="CLU_039458_1_0_1"/>
<dbReference type="InParanoid" id="Q8LBL5"/>
<dbReference type="OMA" id="CDVHIGV"/>
<dbReference type="PhylomeDB" id="Q8LBL5"/>
<dbReference type="UniPathway" id="UPA00143"/>
<dbReference type="PRO" id="PR:Q8LBL5"/>
<dbReference type="Proteomes" id="UP000006548">
    <property type="component" value="Chromosome 3"/>
</dbReference>
<dbReference type="ExpressionAtlas" id="Q8LBL5">
    <property type="expression patterns" value="baseline and differential"/>
</dbReference>
<dbReference type="GO" id="GO:0005737">
    <property type="term" value="C:cytoplasm"/>
    <property type="evidence" value="ECO:0007669"/>
    <property type="project" value="UniProtKB-SubCell"/>
</dbReference>
<dbReference type="GO" id="GO:0061630">
    <property type="term" value="F:ubiquitin protein ligase activity"/>
    <property type="evidence" value="ECO:0000314"/>
    <property type="project" value="UniProtKB"/>
</dbReference>
<dbReference type="GO" id="GO:0008270">
    <property type="term" value="F:zinc ion binding"/>
    <property type="evidence" value="ECO:0007669"/>
    <property type="project" value="UniProtKB-KW"/>
</dbReference>
<dbReference type="GO" id="GO:0050832">
    <property type="term" value="P:defense response to fungus"/>
    <property type="evidence" value="ECO:0000315"/>
    <property type="project" value="TAIR"/>
</dbReference>
<dbReference type="GO" id="GO:0016567">
    <property type="term" value="P:protein ubiquitination"/>
    <property type="evidence" value="ECO:0007669"/>
    <property type="project" value="UniProtKB-UniPathway"/>
</dbReference>
<dbReference type="GO" id="GO:0071596">
    <property type="term" value="P:ubiquitin-dependent protein catabolic process via the N-end rule pathway"/>
    <property type="evidence" value="ECO:0000314"/>
    <property type="project" value="UniProtKB"/>
</dbReference>
<dbReference type="CDD" id="cd02338">
    <property type="entry name" value="ZZ_PCMF_like"/>
    <property type="match status" value="1"/>
</dbReference>
<dbReference type="FunFam" id="3.30.40.10:FF:000489">
    <property type="entry name" value="E3 ubiquitin-protein ligase PRT1"/>
    <property type="match status" value="1"/>
</dbReference>
<dbReference type="FunFam" id="3.30.60.90:FF:000014">
    <property type="entry name" value="E3 ubiquitin-protein ligase PRT1"/>
    <property type="match status" value="1"/>
</dbReference>
<dbReference type="Gene3D" id="3.30.60.90">
    <property type="match status" value="1"/>
</dbReference>
<dbReference type="Gene3D" id="3.30.40.10">
    <property type="entry name" value="Zinc/RING finger domain, C3HC4 (zinc finger)"/>
    <property type="match status" value="2"/>
</dbReference>
<dbReference type="InterPro" id="IPR027370">
    <property type="entry name" value="Znf-RING_euk"/>
</dbReference>
<dbReference type="InterPro" id="IPR001841">
    <property type="entry name" value="Znf_RING"/>
</dbReference>
<dbReference type="InterPro" id="IPR013083">
    <property type="entry name" value="Znf_RING/FYVE/PHD"/>
</dbReference>
<dbReference type="InterPro" id="IPR017907">
    <property type="entry name" value="Znf_RING_CS"/>
</dbReference>
<dbReference type="InterPro" id="IPR000433">
    <property type="entry name" value="Znf_ZZ"/>
</dbReference>
<dbReference type="InterPro" id="IPR043145">
    <property type="entry name" value="Znf_ZZ_sf"/>
</dbReference>
<dbReference type="PANTHER" id="PTHR15898">
    <property type="entry name" value="BIFUNCTIONAL APOPTOSIS REGULATOR"/>
    <property type="match status" value="1"/>
</dbReference>
<dbReference type="PANTHER" id="PTHR15898:SF13">
    <property type="entry name" value="BIFUNCTIONAL APOPTOSIS REGULATOR"/>
    <property type="match status" value="1"/>
</dbReference>
<dbReference type="Pfam" id="PF13920">
    <property type="entry name" value="zf-C3HC4_3"/>
    <property type="match status" value="1"/>
</dbReference>
<dbReference type="Pfam" id="PF13445">
    <property type="entry name" value="zf-RING_UBOX"/>
    <property type="match status" value="1"/>
</dbReference>
<dbReference type="Pfam" id="PF00569">
    <property type="entry name" value="ZZ"/>
    <property type="match status" value="1"/>
</dbReference>
<dbReference type="SMART" id="SM00184">
    <property type="entry name" value="RING"/>
    <property type="match status" value="2"/>
</dbReference>
<dbReference type="SMART" id="SM00291">
    <property type="entry name" value="ZnF_ZZ"/>
    <property type="match status" value="1"/>
</dbReference>
<dbReference type="SUPFAM" id="SSF57850">
    <property type="entry name" value="RING/U-box"/>
    <property type="match status" value="3"/>
</dbReference>
<dbReference type="PROSITE" id="PS00518">
    <property type="entry name" value="ZF_RING_1"/>
    <property type="match status" value="1"/>
</dbReference>
<dbReference type="PROSITE" id="PS50089">
    <property type="entry name" value="ZF_RING_2"/>
    <property type="match status" value="2"/>
</dbReference>
<dbReference type="PROSITE" id="PS01357">
    <property type="entry name" value="ZF_ZZ_1"/>
    <property type="match status" value="1"/>
</dbReference>
<dbReference type="PROSITE" id="PS50135">
    <property type="entry name" value="ZF_ZZ_2"/>
    <property type="match status" value="1"/>
</dbReference>
<organism>
    <name type="scientific">Arabidopsis thaliana</name>
    <name type="common">Mouse-ear cress</name>
    <dbReference type="NCBI Taxonomy" id="3702"/>
    <lineage>
        <taxon>Eukaryota</taxon>
        <taxon>Viridiplantae</taxon>
        <taxon>Streptophyta</taxon>
        <taxon>Embryophyta</taxon>
        <taxon>Tracheophyta</taxon>
        <taxon>Spermatophyta</taxon>
        <taxon>Magnoliopsida</taxon>
        <taxon>eudicotyledons</taxon>
        <taxon>Gunneridae</taxon>
        <taxon>Pentapetalae</taxon>
        <taxon>rosids</taxon>
        <taxon>malvids</taxon>
        <taxon>Brassicales</taxon>
        <taxon>Brassicaceae</taxon>
        <taxon>Camelineae</taxon>
        <taxon>Arabidopsis</taxon>
    </lineage>
</organism>
<accession>Q8LBL5</accession>
<accession>O82767</accession>
<sequence>MAETMKDITMKNDESQEEEIPDQFLCCVCLELLYKPIVLSCGHLSCFWCVHKSMNGFRESHCPICRDPYVHFPSVCQKLYFLLKKMYPLAHKKREEQVLKEEQERECFSPQIDLVLDLSVCSGDSLNVSDKQKVEECSNAANLLSSSSSRGDIPCIPKNQEPTDAKALNVHENELLKDNKVSKQISKDDLLCSACKELLVRPVVLNCGHVYCEGCVVDMAEESEKIKCQECNVCDPRGFPKVCLILEQLLEENFPEEYNSRSSKVQKTLAHNSKGNIQSYLKEGPSLSNDNNNDDPWLANPGSNVHFGAGCDSCGVYPIIGDRYRCKDCKEEIGYDLCKDCYETPSKVPGRFNQQHTPDHRLELARSPQVLINFNSIGILLGPVISNEGMDTDEGEEGPPGSSNESSSTE</sequence>
<proteinExistence type="evidence at transcript level"/>
<keyword id="KW-0963">Cytoplasm</keyword>
<keyword id="KW-0479">Metal-binding</keyword>
<keyword id="KW-1185">Reference proteome</keyword>
<keyword id="KW-0677">Repeat</keyword>
<keyword id="KW-0808">Transferase</keyword>
<keyword id="KW-0833">Ubl conjugation pathway</keyword>
<keyword id="KW-0862">Zinc</keyword>
<keyword id="KW-0863">Zinc-finger</keyword>
<reference key="1">
    <citation type="journal article" date="1998" name="Proc. Natl. Acad. Sci. U.S.A.">
        <title>PRT1 of Arabidopsis thaliana encodes a component of the plant N-end rule pathway.</title>
        <authorList>
            <person name="Potuschak T."/>
            <person name="Stary S."/>
            <person name="Schloegelhofer P."/>
            <person name="Becker F."/>
            <person name="Nejinskaia V."/>
            <person name="Bachmair A."/>
        </authorList>
    </citation>
    <scope>NUCLEOTIDE SEQUENCE [GENOMIC DNA / MRNA]</scope>
    <scope>FUNCTION</scope>
</reference>
<reference key="2">
    <citation type="journal article" date="2000" name="DNA Res.">
        <title>Structural analysis of Arabidopsis thaliana chromosome 3. I. Sequence features of the regions of 4,504,864 bp covered by sixty P1 and TAC clones.</title>
        <authorList>
            <person name="Sato S."/>
            <person name="Nakamura Y."/>
            <person name="Kaneko T."/>
            <person name="Katoh T."/>
            <person name="Asamizu E."/>
            <person name="Tabata S."/>
        </authorList>
    </citation>
    <scope>NUCLEOTIDE SEQUENCE [LARGE SCALE GENOMIC DNA]</scope>
    <source>
        <strain>cv. Columbia</strain>
    </source>
</reference>
<reference key="3">
    <citation type="journal article" date="2017" name="Plant J.">
        <title>Araport11: a complete reannotation of the Arabidopsis thaliana reference genome.</title>
        <authorList>
            <person name="Cheng C.Y."/>
            <person name="Krishnakumar V."/>
            <person name="Chan A.P."/>
            <person name="Thibaud-Nissen F."/>
            <person name="Schobel S."/>
            <person name="Town C.D."/>
        </authorList>
    </citation>
    <scope>GENOME REANNOTATION</scope>
    <source>
        <strain>cv. Columbia</strain>
    </source>
</reference>
<reference key="4">
    <citation type="journal article" date="2003" name="Science">
        <title>Empirical analysis of transcriptional activity in the Arabidopsis genome.</title>
        <authorList>
            <person name="Yamada K."/>
            <person name="Lim J."/>
            <person name="Dale J.M."/>
            <person name="Chen H."/>
            <person name="Shinn P."/>
            <person name="Palm C.J."/>
            <person name="Southwick A.M."/>
            <person name="Wu H.C."/>
            <person name="Kim C.J."/>
            <person name="Nguyen M."/>
            <person name="Pham P.K."/>
            <person name="Cheuk R.F."/>
            <person name="Karlin-Newmann G."/>
            <person name="Liu S.X."/>
            <person name="Lam B."/>
            <person name="Sakano H."/>
            <person name="Wu T."/>
            <person name="Yu G."/>
            <person name="Miranda M."/>
            <person name="Quach H.L."/>
            <person name="Tripp M."/>
            <person name="Chang C.H."/>
            <person name="Lee J.M."/>
            <person name="Toriumi M.J."/>
            <person name="Chan M.M."/>
            <person name="Tang C.C."/>
            <person name="Onodera C.S."/>
            <person name="Deng J.M."/>
            <person name="Akiyama K."/>
            <person name="Ansari Y."/>
            <person name="Arakawa T."/>
            <person name="Banh J."/>
            <person name="Banno F."/>
            <person name="Bowser L."/>
            <person name="Brooks S.Y."/>
            <person name="Carninci P."/>
            <person name="Chao Q."/>
            <person name="Choy N."/>
            <person name="Enju A."/>
            <person name="Goldsmith A.D."/>
            <person name="Gurjal M."/>
            <person name="Hansen N.F."/>
            <person name="Hayashizaki Y."/>
            <person name="Johnson-Hopson C."/>
            <person name="Hsuan V.W."/>
            <person name="Iida K."/>
            <person name="Karnes M."/>
            <person name="Khan S."/>
            <person name="Koesema E."/>
            <person name="Ishida J."/>
            <person name="Jiang P.X."/>
            <person name="Jones T."/>
            <person name="Kawai J."/>
            <person name="Kamiya A."/>
            <person name="Meyers C."/>
            <person name="Nakajima M."/>
            <person name="Narusaka M."/>
            <person name="Seki M."/>
            <person name="Sakurai T."/>
            <person name="Satou M."/>
            <person name="Tamse R."/>
            <person name="Vaysberg M."/>
            <person name="Wallender E.K."/>
            <person name="Wong C."/>
            <person name="Yamamura Y."/>
            <person name="Yuan S."/>
            <person name="Shinozaki K."/>
            <person name="Davis R.W."/>
            <person name="Theologis A."/>
            <person name="Ecker J.R."/>
        </authorList>
    </citation>
    <scope>NUCLEOTIDE SEQUENCE [LARGE SCALE MRNA]</scope>
    <source>
        <strain>cv. Columbia</strain>
    </source>
</reference>
<reference key="5">
    <citation type="submission" date="2002-03" db="EMBL/GenBank/DDBJ databases">
        <title>Full-length cDNA from Arabidopsis thaliana.</title>
        <authorList>
            <person name="Brover V.V."/>
            <person name="Troukhan M.E."/>
            <person name="Alexandrov N.A."/>
            <person name="Lu Y.-P."/>
            <person name="Flavell R.B."/>
            <person name="Feldmann K.A."/>
        </authorList>
    </citation>
    <scope>NUCLEOTIDE SEQUENCE [LARGE SCALE MRNA]</scope>
</reference>
<reference key="6">
    <citation type="journal article" date="1993" name="Proc. Natl. Acad. Sci. U.S.A.">
        <title>Use of a reporter transgene to generate Arabidopsis mutants in ubiquitin-dependent protein degradation.</title>
        <authorList>
            <person name="Bachmair A."/>
            <person name="Becker F."/>
            <person name="Schell J."/>
        </authorList>
    </citation>
    <scope>FUNCTION</scope>
    <scope>MUTANTS PRT1</scope>
</reference>
<reference key="7">
    <citation type="journal article" date="2003" name="Plant Physiol.">
        <title>PRT1 of Arabidopsis is a ubiquitin protein ligase of the plant N-end rule pathway with specificity for aromatic amino-terminal residues.</title>
        <authorList>
            <person name="Stary S."/>
            <person name="Yin X.-J."/>
            <person name="Potuschak T."/>
            <person name="Schloegelhofer P."/>
            <person name="Nizhynska V."/>
            <person name="Bachmair A."/>
        </authorList>
    </citation>
    <scope>FUNCTION</scope>
</reference>
<reference key="8">
    <citation type="journal article" date="2007" name="FEBS Lett.">
        <title>PRT6/At5g02310 encodes an Arabidopsis ubiquitin ligase of the N-end rule pathway with arginine specificity and is not the CER3 locus.</title>
        <authorList>
            <person name="Garzon M."/>
            <person name="Eifler K."/>
            <person name="Faust A."/>
            <person name="Scheel H."/>
            <person name="Hofmann K."/>
            <person name="Koncz C."/>
            <person name="Yephremov A."/>
            <person name="Bachmair A."/>
        </authorList>
    </citation>
    <scope>FUNCTION</scope>
</reference>
<protein>
    <recommendedName>
        <fullName>E3 ubiquitin-protein ligase PRT1</fullName>
        <ecNumber>2.3.2.27</ecNumber>
    </recommendedName>
    <alternativeName>
        <fullName>Proteolysis 1 protein</fullName>
    </alternativeName>
    <alternativeName>
        <fullName evidence="8">RING-type E3 ubiquitin transferase PRT1</fullName>
    </alternativeName>
</protein>
<comment type="function">
    <text evidence="4 5 6 7">E3 ubiquitin-protein ligase that mediates ubiquitination and subsequent proteasomal degradation of target proteins. Functions in the N-end rule pathway of protein degradation, where it specifically recognizes and ubiquitinates proteins with a N-terminal bulky aromatic amino acid (Phe). Does not act on aliphatic hydrophobic and basic N-terminal residues (Arg or Leu) containing proteins.</text>
</comment>
<comment type="catalytic activity">
    <reaction>
        <text>S-ubiquitinyl-[E2 ubiquitin-conjugating enzyme]-L-cysteine + [acceptor protein]-L-lysine = [E2 ubiquitin-conjugating enzyme]-L-cysteine + N(6)-ubiquitinyl-[acceptor protein]-L-lysine.</text>
        <dbReference type="EC" id="2.3.2.27"/>
    </reaction>
</comment>
<comment type="pathway">
    <text evidence="8">Protein modification; protein ubiquitination.</text>
</comment>
<comment type="subcellular location">
    <subcellularLocation>
        <location evidence="8">Cytoplasm</location>
    </subcellularLocation>
</comment>
<comment type="sequence caution" evidence="8">
    <conflict type="erroneous initiation">
        <sequence resource="EMBL-CDS" id="AAM64697"/>
    </conflict>
    <text>Truncated N-terminus.</text>
</comment>